<dbReference type="EC" id="3.4.23.-"/>
<dbReference type="EMBL" id="D10198">
    <property type="protein sequence ID" value="BAA01046.1"/>
    <property type="molecule type" value="Genomic_DNA"/>
</dbReference>
<dbReference type="EMBL" id="CU329670">
    <property type="protein sequence ID" value="CAB86349.2"/>
    <property type="molecule type" value="Genomic_DNA"/>
</dbReference>
<dbReference type="EMBL" id="AB027806">
    <property type="protein sequence ID" value="BAA87110.1"/>
    <property type="molecule type" value="Genomic_DNA"/>
</dbReference>
<dbReference type="PIR" id="A42249">
    <property type="entry name" value="A42249"/>
</dbReference>
<dbReference type="RefSeq" id="XP_001713079.1">
    <property type="nucleotide sequence ID" value="XM_001713027.2"/>
</dbReference>
<dbReference type="SMR" id="P32834"/>
<dbReference type="BioGRID" id="280544">
    <property type="interactions" value="2"/>
</dbReference>
<dbReference type="FunCoup" id="P32834">
    <property type="interactions" value="45"/>
</dbReference>
<dbReference type="STRING" id="284812.P32834"/>
<dbReference type="MEROPS" id="A01.A91"/>
<dbReference type="GlyCosmos" id="P32834">
    <property type="glycosylation" value="10 sites, No reported glycans"/>
</dbReference>
<dbReference type="iPTMnet" id="P32834"/>
<dbReference type="PaxDb" id="4896-SPAC26A3.01.1"/>
<dbReference type="EnsemblFungi" id="SPAC26A3.01.1">
    <property type="protein sequence ID" value="SPAC26A3.01.1:pep"/>
    <property type="gene ID" value="SPAC26A3.01"/>
</dbReference>
<dbReference type="PomBase" id="SPAC26A3.01">
    <property type="gene designation" value="sxa1"/>
</dbReference>
<dbReference type="VEuPathDB" id="FungiDB:SPAC26A3.01"/>
<dbReference type="eggNOG" id="KOG1339">
    <property type="taxonomic scope" value="Eukaryota"/>
</dbReference>
<dbReference type="HOGENOM" id="CLU_033751_0_0_1"/>
<dbReference type="InParanoid" id="P32834"/>
<dbReference type="OMA" id="PYTWVTA"/>
<dbReference type="PhylomeDB" id="P32834"/>
<dbReference type="PRO" id="PR:P32834"/>
<dbReference type="Proteomes" id="UP000002485">
    <property type="component" value="Chromosome I"/>
</dbReference>
<dbReference type="GO" id="GO:0005783">
    <property type="term" value="C:endoplasmic reticulum"/>
    <property type="evidence" value="ECO:0007005"/>
    <property type="project" value="PomBase"/>
</dbReference>
<dbReference type="GO" id="GO:0009897">
    <property type="term" value="C:external side of plasma membrane"/>
    <property type="evidence" value="ECO:0000304"/>
    <property type="project" value="PomBase"/>
</dbReference>
<dbReference type="GO" id="GO:0005886">
    <property type="term" value="C:plasma membrane"/>
    <property type="evidence" value="ECO:0007005"/>
    <property type="project" value="PomBase"/>
</dbReference>
<dbReference type="GO" id="GO:0004190">
    <property type="term" value="F:aspartic-type endopeptidase activity"/>
    <property type="evidence" value="ECO:0000318"/>
    <property type="project" value="GO_Central"/>
</dbReference>
<dbReference type="GO" id="GO:0008233">
    <property type="term" value="F:peptidase activity"/>
    <property type="evidence" value="ECO:0000315"/>
    <property type="project" value="PomBase"/>
</dbReference>
<dbReference type="GO" id="GO:0006508">
    <property type="term" value="P:proteolysis"/>
    <property type="evidence" value="ECO:0000318"/>
    <property type="project" value="GO_Central"/>
</dbReference>
<dbReference type="CDD" id="cd05471">
    <property type="entry name" value="pepsin_like"/>
    <property type="match status" value="1"/>
</dbReference>
<dbReference type="FunFam" id="2.40.70.10:FF:000310">
    <property type="match status" value="1"/>
</dbReference>
<dbReference type="Gene3D" id="2.40.70.10">
    <property type="entry name" value="Acid Proteases"/>
    <property type="match status" value="2"/>
</dbReference>
<dbReference type="InterPro" id="IPR001461">
    <property type="entry name" value="Aspartic_peptidase_A1"/>
</dbReference>
<dbReference type="InterPro" id="IPR001969">
    <property type="entry name" value="Aspartic_peptidase_AS"/>
</dbReference>
<dbReference type="InterPro" id="IPR034164">
    <property type="entry name" value="Pepsin-like_dom"/>
</dbReference>
<dbReference type="InterPro" id="IPR033121">
    <property type="entry name" value="PEPTIDASE_A1"/>
</dbReference>
<dbReference type="InterPro" id="IPR021109">
    <property type="entry name" value="Peptidase_aspartic_dom_sf"/>
</dbReference>
<dbReference type="PANTHER" id="PTHR47966:SF79">
    <property type="entry name" value="ASPARTIC PROTEINASE SXA1"/>
    <property type="match status" value="1"/>
</dbReference>
<dbReference type="PANTHER" id="PTHR47966">
    <property type="entry name" value="BETA-SITE APP-CLEAVING ENZYME, ISOFORM A-RELATED"/>
    <property type="match status" value="1"/>
</dbReference>
<dbReference type="Pfam" id="PF00026">
    <property type="entry name" value="Asp"/>
    <property type="match status" value="1"/>
</dbReference>
<dbReference type="PRINTS" id="PR00792">
    <property type="entry name" value="PEPSIN"/>
</dbReference>
<dbReference type="SUPFAM" id="SSF50630">
    <property type="entry name" value="Acid proteases"/>
    <property type="match status" value="1"/>
</dbReference>
<dbReference type="PROSITE" id="PS00141">
    <property type="entry name" value="ASP_PROTEASE"/>
    <property type="match status" value="1"/>
</dbReference>
<dbReference type="PROSITE" id="PS51767">
    <property type="entry name" value="PEPTIDASE_A1"/>
    <property type="match status" value="1"/>
</dbReference>
<name>SXA1_SCHPO</name>
<comment type="function">
    <text>Involved in degradation or processing of the mating pheromones. Its loss may cause a persistent response to the pheromones. It may cleave the mating pheromone M-factor. May be involved in processing of zymogens that are required for zygote formation.</text>
</comment>
<comment type="similarity">
    <text evidence="4">Belongs to the peptidase A1 family.</text>
</comment>
<reference key="1">
    <citation type="journal article" date="1992" name="Mol. Cell. Biol.">
        <title>Schizosaccharomyces pombe sxa1+ and sxa2+ encode putative proteases involved in the mating response.</title>
        <authorList>
            <person name="Imai Y."/>
            <person name="Yamamoto M."/>
        </authorList>
    </citation>
    <scope>NUCLEOTIDE SEQUENCE [GENOMIC DNA]</scope>
</reference>
<reference key="2">
    <citation type="journal article" date="2002" name="Nature">
        <title>The genome sequence of Schizosaccharomyces pombe.</title>
        <authorList>
            <person name="Wood V."/>
            <person name="Gwilliam R."/>
            <person name="Rajandream M.A."/>
            <person name="Lyne M.H."/>
            <person name="Lyne R."/>
            <person name="Stewart A."/>
            <person name="Sgouros J.G."/>
            <person name="Peat N."/>
            <person name="Hayles J."/>
            <person name="Baker S.G."/>
            <person name="Basham D."/>
            <person name="Bowman S."/>
            <person name="Brooks K."/>
            <person name="Brown D."/>
            <person name="Brown S."/>
            <person name="Chillingworth T."/>
            <person name="Churcher C.M."/>
            <person name="Collins M."/>
            <person name="Connor R."/>
            <person name="Cronin A."/>
            <person name="Davis P."/>
            <person name="Feltwell T."/>
            <person name="Fraser A."/>
            <person name="Gentles S."/>
            <person name="Goble A."/>
            <person name="Hamlin N."/>
            <person name="Harris D.E."/>
            <person name="Hidalgo J."/>
            <person name="Hodgson G."/>
            <person name="Holroyd S."/>
            <person name="Hornsby T."/>
            <person name="Howarth S."/>
            <person name="Huckle E.J."/>
            <person name="Hunt S."/>
            <person name="Jagels K."/>
            <person name="James K.D."/>
            <person name="Jones L."/>
            <person name="Jones M."/>
            <person name="Leather S."/>
            <person name="McDonald S."/>
            <person name="McLean J."/>
            <person name="Mooney P."/>
            <person name="Moule S."/>
            <person name="Mungall K.L."/>
            <person name="Murphy L.D."/>
            <person name="Niblett D."/>
            <person name="Odell C."/>
            <person name="Oliver K."/>
            <person name="O'Neil S."/>
            <person name="Pearson D."/>
            <person name="Quail M.A."/>
            <person name="Rabbinowitsch E."/>
            <person name="Rutherford K.M."/>
            <person name="Rutter S."/>
            <person name="Saunders D."/>
            <person name="Seeger K."/>
            <person name="Sharp S."/>
            <person name="Skelton J."/>
            <person name="Simmonds M.N."/>
            <person name="Squares R."/>
            <person name="Squares S."/>
            <person name="Stevens K."/>
            <person name="Taylor K."/>
            <person name="Taylor R.G."/>
            <person name="Tivey A."/>
            <person name="Walsh S.V."/>
            <person name="Warren T."/>
            <person name="Whitehead S."/>
            <person name="Woodward J.R."/>
            <person name="Volckaert G."/>
            <person name="Aert R."/>
            <person name="Robben J."/>
            <person name="Grymonprez B."/>
            <person name="Weltjens I."/>
            <person name="Vanstreels E."/>
            <person name="Rieger M."/>
            <person name="Schaefer M."/>
            <person name="Mueller-Auer S."/>
            <person name="Gabel C."/>
            <person name="Fuchs M."/>
            <person name="Duesterhoeft A."/>
            <person name="Fritzc C."/>
            <person name="Holzer E."/>
            <person name="Moestl D."/>
            <person name="Hilbert H."/>
            <person name="Borzym K."/>
            <person name="Langer I."/>
            <person name="Beck A."/>
            <person name="Lehrach H."/>
            <person name="Reinhardt R."/>
            <person name="Pohl T.M."/>
            <person name="Eger P."/>
            <person name="Zimmermann W."/>
            <person name="Wedler H."/>
            <person name="Wambutt R."/>
            <person name="Purnelle B."/>
            <person name="Goffeau A."/>
            <person name="Cadieu E."/>
            <person name="Dreano S."/>
            <person name="Gloux S."/>
            <person name="Lelaure V."/>
            <person name="Mottier S."/>
            <person name="Galibert F."/>
            <person name="Aves S.J."/>
            <person name="Xiang Z."/>
            <person name="Hunt C."/>
            <person name="Moore K."/>
            <person name="Hurst S.M."/>
            <person name="Lucas M."/>
            <person name="Rochet M."/>
            <person name="Gaillardin C."/>
            <person name="Tallada V.A."/>
            <person name="Garzon A."/>
            <person name="Thode G."/>
            <person name="Daga R.R."/>
            <person name="Cruzado L."/>
            <person name="Jimenez J."/>
            <person name="Sanchez M."/>
            <person name="del Rey F."/>
            <person name="Benito J."/>
            <person name="Dominguez A."/>
            <person name="Revuelta J.L."/>
            <person name="Moreno S."/>
            <person name="Armstrong J."/>
            <person name="Forsburg S.L."/>
            <person name="Cerutti L."/>
            <person name="Lowe T."/>
            <person name="McCombie W.R."/>
            <person name="Paulsen I."/>
            <person name="Potashkin J."/>
            <person name="Shpakovski G.V."/>
            <person name="Ussery D."/>
            <person name="Barrell B.G."/>
            <person name="Nurse P."/>
        </authorList>
    </citation>
    <scope>NUCLEOTIDE SEQUENCE [LARGE SCALE GENOMIC DNA]</scope>
    <source>
        <strain>972 / ATCC 24843</strain>
    </source>
</reference>
<reference key="3">
    <citation type="journal article" date="2000" name="Genes Cells">
        <title>Large-scale screening of intracellular protein localization in living fission yeast cells by the use of a GFP-fusion genomic DNA library.</title>
        <authorList>
            <person name="Ding D.-Q."/>
            <person name="Tomita Y."/>
            <person name="Yamamoto A."/>
            <person name="Chikashige Y."/>
            <person name="Haraguchi T."/>
            <person name="Hiraoka Y."/>
        </authorList>
    </citation>
    <scope>NUCLEOTIDE SEQUENCE [LARGE SCALE GENOMIC DNA] OF 308-481</scope>
    <source>
        <strain>ATCC 38364 / 968</strain>
    </source>
</reference>
<sequence length="533" mass="56853">MKASFFVFAISALQALQASVASAYSEVPGKRSVVLNLQHSQYDHVARKLERTKVLNKRDSSGYPVLDLEYTDAGGYFANLTLGSNERVYSLTLDTGSPYTWVTAKNITALSASEIWSDTDGVDAGRSTSDIRTNACTNYTCFDYSSTTARRTNSSTIGFLASYGDNTTVLGYNMVDNAYFAGLTLPGFEFGLATREYDSSQISVTPGIIGLSVAMTITGISSDDKVVAFTPPTIVDQLVSANVIDTPAFGIYLNEDVGELIFGGYDKAKINGSVHWVNISSSDDSTFYSVNLESITVTNSTSSNNVQSSKRSSKDIEVNTTVTLDTGTVYIYLPEDTVESIADQYQGIVSEYGYVVIYCDSFSDSDYISFNFGSDADFHVSVNDLVIYRQESTSGDICYLALFEGDTSSYLLGQYFLQYVYSIYDWDAQKIGLAALNSNATSTANHQILNINSALRSVTSGQSVSATPTVSMSIAATSFGSSLVLTASASPSSTSVDGSSSSDSSEASGAASVGVSISAIVLCASTLISLLFA</sequence>
<proteinExistence type="inferred from homology"/>
<accession>P32834</accession>
<accession>Q9P7B9</accession>
<accession>Q9UU52</accession>
<feature type="signal peptide" evidence="1">
    <location>
        <begin position="1"/>
        <end position="23"/>
    </location>
</feature>
<feature type="chain" id="PRO_0000025932" description="Aspartic proteinase sxa1">
    <location>
        <begin position="24"/>
        <end position="533"/>
    </location>
</feature>
<feature type="domain" description="Peptidase A1" evidence="2">
    <location>
        <begin position="76"/>
        <end position="434"/>
    </location>
</feature>
<feature type="active site" evidence="3">
    <location>
        <position position="94"/>
    </location>
</feature>
<feature type="active site" evidence="3">
    <location>
        <position position="325"/>
    </location>
</feature>
<feature type="glycosylation site" description="N-linked (GlcNAc...) asparagine" evidence="1">
    <location>
        <position position="79"/>
    </location>
</feature>
<feature type="glycosylation site" description="N-linked (GlcNAc...) asparagine" evidence="1">
    <location>
        <position position="106"/>
    </location>
</feature>
<feature type="glycosylation site" description="N-linked (GlcNAc...) asparagine" evidence="1">
    <location>
        <position position="138"/>
    </location>
</feature>
<feature type="glycosylation site" description="N-linked (GlcNAc...) asparagine" evidence="1">
    <location>
        <position position="153"/>
    </location>
</feature>
<feature type="glycosylation site" description="N-linked (GlcNAc...) asparagine" evidence="1">
    <location>
        <position position="166"/>
    </location>
</feature>
<feature type="glycosylation site" description="N-linked (GlcNAc...) asparagine" evidence="1">
    <location>
        <position position="271"/>
    </location>
</feature>
<feature type="glycosylation site" description="N-linked (GlcNAc...) asparagine" evidence="1">
    <location>
        <position position="278"/>
    </location>
</feature>
<feature type="glycosylation site" description="N-linked (GlcNAc...) asparagine" evidence="1">
    <location>
        <position position="299"/>
    </location>
</feature>
<feature type="glycosylation site" description="N-linked (GlcNAc...) asparagine" evidence="1">
    <location>
        <position position="319"/>
    </location>
</feature>
<feature type="glycosylation site" description="N-linked (GlcNAc...) asparagine" evidence="1">
    <location>
        <position position="439"/>
    </location>
</feature>
<feature type="sequence conflict" description="In Ref. 1; BAA01046." evidence="4" ref="1">
    <original>T</original>
    <variation>I</variation>
    <location>
        <position position="100"/>
    </location>
</feature>
<organism>
    <name type="scientific">Schizosaccharomyces pombe (strain 972 / ATCC 24843)</name>
    <name type="common">Fission yeast</name>
    <dbReference type="NCBI Taxonomy" id="284812"/>
    <lineage>
        <taxon>Eukaryota</taxon>
        <taxon>Fungi</taxon>
        <taxon>Dikarya</taxon>
        <taxon>Ascomycota</taxon>
        <taxon>Taphrinomycotina</taxon>
        <taxon>Schizosaccharomycetes</taxon>
        <taxon>Schizosaccharomycetales</taxon>
        <taxon>Schizosaccharomycetaceae</taxon>
        <taxon>Schizosaccharomyces</taxon>
    </lineage>
</organism>
<keyword id="KW-0064">Aspartyl protease</keyword>
<keyword id="KW-0325">Glycoprotein</keyword>
<keyword id="KW-0378">Hydrolase</keyword>
<keyword id="KW-0645">Protease</keyword>
<keyword id="KW-1185">Reference proteome</keyword>
<keyword id="KW-0732">Signal</keyword>
<gene>
    <name type="primary">sxa1</name>
    <name type="ORF">SPAC26A3.01</name>
    <name type="ORF">SPAC2E1P5.06</name>
</gene>
<evidence type="ECO:0000255" key="1"/>
<evidence type="ECO:0000255" key="2">
    <source>
        <dbReference type="PROSITE-ProRule" id="PRU01103"/>
    </source>
</evidence>
<evidence type="ECO:0000255" key="3">
    <source>
        <dbReference type="PROSITE-ProRule" id="PRU10094"/>
    </source>
</evidence>
<evidence type="ECO:0000305" key="4"/>
<protein>
    <recommendedName>
        <fullName>Aspartic proteinase sxa1</fullName>
        <ecNumber>3.4.23.-</ecNumber>
    </recommendedName>
</protein>